<reference key="1">
    <citation type="journal article" date="2008" name="DNA Res.">
        <title>Complete genome sequence and comparative analysis of the wild-type commensal Escherichia coli strain SE11 isolated from a healthy adult.</title>
        <authorList>
            <person name="Oshima K."/>
            <person name="Toh H."/>
            <person name="Ogura Y."/>
            <person name="Sasamoto H."/>
            <person name="Morita H."/>
            <person name="Park S.-H."/>
            <person name="Ooka T."/>
            <person name="Iyoda S."/>
            <person name="Taylor T.D."/>
            <person name="Hayashi T."/>
            <person name="Itoh K."/>
            <person name="Hattori M."/>
        </authorList>
    </citation>
    <scope>NUCLEOTIDE SEQUENCE [LARGE SCALE GENOMIC DNA]</scope>
    <source>
        <strain>SE11</strain>
    </source>
</reference>
<gene>
    <name evidence="1" type="primary">lepA</name>
    <name type="ordered locus">ECSE_2857</name>
</gene>
<comment type="function">
    <text evidence="1">Required for accurate and efficient protein synthesis under certain stress conditions. May act as a fidelity factor of the translation reaction, by catalyzing a one-codon backward translocation of tRNAs on improperly translocated ribosomes. Back-translocation proceeds from a post-translocation (POST) complex to a pre-translocation (PRE) complex, thus giving elongation factor G a second chance to translocate the tRNAs correctly. Binds to ribosomes in a GTP-dependent manner.</text>
</comment>
<comment type="catalytic activity">
    <reaction evidence="1">
        <text>GTP + H2O = GDP + phosphate + H(+)</text>
        <dbReference type="Rhea" id="RHEA:19669"/>
        <dbReference type="ChEBI" id="CHEBI:15377"/>
        <dbReference type="ChEBI" id="CHEBI:15378"/>
        <dbReference type="ChEBI" id="CHEBI:37565"/>
        <dbReference type="ChEBI" id="CHEBI:43474"/>
        <dbReference type="ChEBI" id="CHEBI:58189"/>
        <dbReference type="EC" id="3.6.5.n1"/>
    </reaction>
</comment>
<comment type="subcellular location">
    <subcellularLocation>
        <location evidence="1">Cell inner membrane</location>
        <topology evidence="1">Peripheral membrane protein</topology>
        <orientation evidence="1">Cytoplasmic side</orientation>
    </subcellularLocation>
</comment>
<comment type="similarity">
    <text evidence="1">Belongs to the TRAFAC class translation factor GTPase superfamily. Classic translation factor GTPase family. LepA subfamily.</text>
</comment>
<dbReference type="EC" id="3.6.5.n1" evidence="1"/>
<dbReference type="EMBL" id="AP009240">
    <property type="protein sequence ID" value="BAG78381.1"/>
    <property type="molecule type" value="Genomic_DNA"/>
</dbReference>
<dbReference type="RefSeq" id="WP_000790161.1">
    <property type="nucleotide sequence ID" value="NC_011415.1"/>
</dbReference>
<dbReference type="SMR" id="B6I5E3"/>
<dbReference type="KEGG" id="ecy:ECSE_2857"/>
<dbReference type="HOGENOM" id="CLU_009995_3_3_6"/>
<dbReference type="Proteomes" id="UP000008199">
    <property type="component" value="Chromosome"/>
</dbReference>
<dbReference type="GO" id="GO:0005886">
    <property type="term" value="C:plasma membrane"/>
    <property type="evidence" value="ECO:0007669"/>
    <property type="project" value="UniProtKB-SubCell"/>
</dbReference>
<dbReference type="GO" id="GO:0005525">
    <property type="term" value="F:GTP binding"/>
    <property type="evidence" value="ECO:0007669"/>
    <property type="project" value="UniProtKB-UniRule"/>
</dbReference>
<dbReference type="GO" id="GO:0003924">
    <property type="term" value="F:GTPase activity"/>
    <property type="evidence" value="ECO:0007669"/>
    <property type="project" value="UniProtKB-UniRule"/>
</dbReference>
<dbReference type="GO" id="GO:0097216">
    <property type="term" value="F:guanosine tetraphosphate binding"/>
    <property type="evidence" value="ECO:0007669"/>
    <property type="project" value="UniProtKB-ARBA"/>
</dbReference>
<dbReference type="GO" id="GO:0043022">
    <property type="term" value="F:ribosome binding"/>
    <property type="evidence" value="ECO:0007669"/>
    <property type="project" value="UniProtKB-UniRule"/>
</dbReference>
<dbReference type="GO" id="GO:0003746">
    <property type="term" value="F:translation elongation factor activity"/>
    <property type="evidence" value="ECO:0007669"/>
    <property type="project" value="UniProtKB-UniRule"/>
</dbReference>
<dbReference type="GO" id="GO:0045727">
    <property type="term" value="P:positive regulation of translation"/>
    <property type="evidence" value="ECO:0007669"/>
    <property type="project" value="UniProtKB-UniRule"/>
</dbReference>
<dbReference type="CDD" id="cd03699">
    <property type="entry name" value="EF4_II"/>
    <property type="match status" value="1"/>
</dbReference>
<dbReference type="CDD" id="cd16260">
    <property type="entry name" value="EF4_III"/>
    <property type="match status" value="1"/>
</dbReference>
<dbReference type="CDD" id="cd01890">
    <property type="entry name" value="LepA"/>
    <property type="match status" value="1"/>
</dbReference>
<dbReference type="CDD" id="cd03709">
    <property type="entry name" value="lepA_C"/>
    <property type="match status" value="1"/>
</dbReference>
<dbReference type="FunFam" id="3.30.70.240:FF:000005">
    <property type="entry name" value="Elongation factor 4"/>
    <property type="match status" value="1"/>
</dbReference>
<dbReference type="FunFam" id="3.40.50.300:FF:000078">
    <property type="entry name" value="Elongation factor 4"/>
    <property type="match status" value="1"/>
</dbReference>
<dbReference type="FunFam" id="2.40.30.10:FF:000015">
    <property type="entry name" value="Translation factor GUF1, mitochondrial"/>
    <property type="match status" value="1"/>
</dbReference>
<dbReference type="FunFam" id="3.30.70.2570:FF:000001">
    <property type="entry name" value="Translation factor GUF1, mitochondrial"/>
    <property type="match status" value="1"/>
</dbReference>
<dbReference type="FunFam" id="3.30.70.870:FF:000004">
    <property type="entry name" value="Translation factor GUF1, mitochondrial"/>
    <property type="match status" value="1"/>
</dbReference>
<dbReference type="Gene3D" id="3.30.70.240">
    <property type="match status" value="1"/>
</dbReference>
<dbReference type="Gene3D" id="3.30.70.2570">
    <property type="entry name" value="Elongation factor 4, C-terminal domain"/>
    <property type="match status" value="1"/>
</dbReference>
<dbReference type="Gene3D" id="3.30.70.870">
    <property type="entry name" value="Elongation Factor G (Translational Gtpase), domain 3"/>
    <property type="match status" value="1"/>
</dbReference>
<dbReference type="Gene3D" id="3.40.50.300">
    <property type="entry name" value="P-loop containing nucleotide triphosphate hydrolases"/>
    <property type="match status" value="1"/>
</dbReference>
<dbReference type="Gene3D" id="2.40.30.10">
    <property type="entry name" value="Translation factors"/>
    <property type="match status" value="1"/>
</dbReference>
<dbReference type="HAMAP" id="MF_00071">
    <property type="entry name" value="LepA"/>
    <property type="match status" value="1"/>
</dbReference>
<dbReference type="InterPro" id="IPR006297">
    <property type="entry name" value="EF-4"/>
</dbReference>
<dbReference type="InterPro" id="IPR035647">
    <property type="entry name" value="EFG_III/V"/>
</dbReference>
<dbReference type="InterPro" id="IPR000640">
    <property type="entry name" value="EFG_V-like"/>
</dbReference>
<dbReference type="InterPro" id="IPR004161">
    <property type="entry name" value="EFTu-like_2"/>
</dbReference>
<dbReference type="InterPro" id="IPR031157">
    <property type="entry name" value="G_TR_CS"/>
</dbReference>
<dbReference type="InterPro" id="IPR038363">
    <property type="entry name" value="LepA_C_sf"/>
</dbReference>
<dbReference type="InterPro" id="IPR013842">
    <property type="entry name" value="LepA_CTD"/>
</dbReference>
<dbReference type="InterPro" id="IPR035654">
    <property type="entry name" value="LepA_IV"/>
</dbReference>
<dbReference type="InterPro" id="IPR027417">
    <property type="entry name" value="P-loop_NTPase"/>
</dbReference>
<dbReference type="InterPro" id="IPR005225">
    <property type="entry name" value="Small_GTP-bd"/>
</dbReference>
<dbReference type="InterPro" id="IPR000795">
    <property type="entry name" value="T_Tr_GTP-bd_dom"/>
</dbReference>
<dbReference type="NCBIfam" id="TIGR01393">
    <property type="entry name" value="lepA"/>
    <property type="match status" value="1"/>
</dbReference>
<dbReference type="NCBIfam" id="TIGR00231">
    <property type="entry name" value="small_GTP"/>
    <property type="match status" value="1"/>
</dbReference>
<dbReference type="PANTHER" id="PTHR43512:SF4">
    <property type="entry name" value="TRANSLATION FACTOR GUF1 HOMOLOG, CHLOROPLASTIC"/>
    <property type="match status" value="1"/>
</dbReference>
<dbReference type="PANTHER" id="PTHR43512">
    <property type="entry name" value="TRANSLATION FACTOR GUF1-RELATED"/>
    <property type="match status" value="1"/>
</dbReference>
<dbReference type="Pfam" id="PF00679">
    <property type="entry name" value="EFG_C"/>
    <property type="match status" value="1"/>
</dbReference>
<dbReference type="Pfam" id="PF00009">
    <property type="entry name" value="GTP_EFTU"/>
    <property type="match status" value="1"/>
</dbReference>
<dbReference type="Pfam" id="PF03144">
    <property type="entry name" value="GTP_EFTU_D2"/>
    <property type="match status" value="1"/>
</dbReference>
<dbReference type="Pfam" id="PF06421">
    <property type="entry name" value="LepA_C"/>
    <property type="match status" value="1"/>
</dbReference>
<dbReference type="PRINTS" id="PR00315">
    <property type="entry name" value="ELONGATNFCT"/>
</dbReference>
<dbReference type="SUPFAM" id="SSF54980">
    <property type="entry name" value="EF-G C-terminal domain-like"/>
    <property type="match status" value="2"/>
</dbReference>
<dbReference type="SUPFAM" id="SSF52540">
    <property type="entry name" value="P-loop containing nucleoside triphosphate hydrolases"/>
    <property type="match status" value="1"/>
</dbReference>
<dbReference type="PROSITE" id="PS00301">
    <property type="entry name" value="G_TR_1"/>
    <property type="match status" value="1"/>
</dbReference>
<dbReference type="PROSITE" id="PS51722">
    <property type="entry name" value="G_TR_2"/>
    <property type="match status" value="1"/>
</dbReference>
<name>LEPA_ECOSE</name>
<organism>
    <name type="scientific">Escherichia coli (strain SE11)</name>
    <dbReference type="NCBI Taxonomy" id="409438"/>
    <lineage>
        <taxon>Bacteria</taxon>
        <taxon>Pseudomonadati</taxon>
        <taxon>Pseudomonadota</taxon>
        <taxon>Gammaproteobacteria</taxon>
        <taxon>Enterobacterales</taxon>
        <taxon>Enterobacteriaceae</taxon>
        <taxon>Escherichia</taxon>
    </lineage>
</organism>
<keyword id="KW-0997">Cell inner membrane</keyword>
<keyword id="KW-1003">Cell membrane</keyword>
<keyword id="KW-0342">GTP-binding</keyword>
<keyword id="KW-0378">Hydrolase</keyword>
<keyword id="KW-0472">Membrane</keyword>
<keyword id="KW-0547">Nucleotide-binding</keyword>
<keyword id="KW-0648">Protein biosynthesis</keyword>
<sequence length="599" mass="66639">MKNIRNFSIIAHIDHGKSTLSDRIIQICGGLSDREMEAQVLDSMDLERERGITIKAQSVTLDYKASDGETYQLNFIDTPGHVDFSYEVSRSLAACEGALLVVDAGQGVEAQTLANCYTAMEMDLEVVPVLNKIDLPAADPERVAEEIEDIVGIDATDAVRCSAKTGVGVQDVLERLVRDIPPPEGDPEGPLQALIIDSWFDNYLGVVSLIRIKNGTLRKGDKVKVMSTGQTYNADRLGIFTPKQVDRTELKCGEVGWLVCAIKDIHGAPVGDTLTLARNPAEKALPGFKKVKPQVYAGLFPVRSDDYEAFRDALGKLSLNDASLFYEPESSSALGFGFRCGFLGLLHMEIIQERLEREYDLDLITTAPTVVYEVETTSREVIYVDSPSKLPAVNNIYELREPIAECHMLLPQAYLGNVITLCVEKRGVQTNMVYHGNQVALTYEIPMAEVVLDFFDRLKSTSRGYASLDYNFKRFQASDMVRVDVLINGERVDALALITHRDNSQNRGRELVEKMKDLIPRQQFDIAIQAAIGTHIIARSTVKQLRKNVLAKCYGGDISRKKKLLQKQKEGKKRMKQIGNVELPQEAFLAILHVGKDNK</sequence>
<accession>B6I5E3</accession>
<protein>
    <recommendedName>
        <fullName evidence="1">Elongation factor 4</fullName>
        <shortName evidence="1">EF-4</shortName>
        <ecNumber evidence="1">3.6.5.n1</ecNumber>
    </recommendedName>
    <alternativeName>
        <fullName evidence="1">Ribosomal back-translocase LepA</fullName>
    </alternativeName>
</protein>
<feature type="chain" id="PRO_1000092397" description="Elongation factor 4">
    <location>
        <begin position="1"/>
        <end position="599"/>
    </location>
</feature>
<feature type="domain" description="tr-type G">
    <location>
        <begin position="2"/>
        <end position="184"/>
    </location>
</feature>
<feature type="binding site" evidence="1">
    <location>
        <begin position="14"/>
        <end position="19"/>
    </location>
    <ligand>
        <name>GTP</name>
        <dbReference type="ChEBI" id="CHEBI:37565"/>
    </ligand>
</feature>
<feature type="binding site" evidence="1">
    <location>
        <begin position="131"/>
        <end position="134"/>
    </location>
    <ligand>
        <name>GTP</name>
        <dbReference type="ChEBI" id="CHEBI:37565"/>
    </ligand>
</feature>
<evidence type="ECO:0000255" key="1">
    <source>
        <dbReference type="HAMAP-Rule" id="MF_00071"/>
    </source>
</evidence>
<proteinExistence type="inferred from homology"/>